<organism>
    <name type="scientific">Synechococcus sp. (strain JA-2-3B'a(2-13))</name>
    <name type="common">Cyanobacteria bacterium Yellowstone B-Prime</name>
    <dbReference type="NCBI Taxonomy" id="321332"/>
    <lineage>
        <taxon>Bacteria</taxon>
        <taxon>Bacillati</taxon>
        <taxon>Cyanobacteriota</taxon>
        <taxon>Cyanophyceae</taxon>
        <taxon>Synechococcales</taxon>
        <taxon>Synechococcaceae</taxon>
        <taxon>Synechococcus</taxon>
    </lineage>
</organism>
<dbReference type="EMBL" id="CP000240">
    <property type="protein sequence ID" value="ABD03187.1"/>
    <property type="molecule type" value="Genomic_DNA"/>
</dbReference>
<dbReference type="RefSeq" id="WP_011433822.1">
    <property type="nucleotide sequence ID" value="NC_007776.1"/>
</dbReference>
<dbReference type="SMR" id="Q2JJI0"/>
<dbReference type="STRING" id="321332.CYB_2246"/>
<dbReference type="KEGG" id="cyb:CYB_2246"/>
<dbReference type="eggNOG" id="COG0779">
    <property type="taxonomic scope" value="Bacteria"/>
</dbReference>
<dbReference type="HOGENOM" id="CLU_070525_2_1_3"/>
<dbReference type="OrthoDB" id="9805006at2"/>
<dbReference type="Proteomes" id="UP000001938">
    <property type="component" value="Chromosome"/>
</dbReference>
<dbReference type="GO" id="GO:0005829">
    <property type="term" value="C:cytosol"/>
    <property type="evidence" value="ECO:0007669"/>
    <property type="project" value="TreeGrafter"/>
</dbReference>
<dbReference type="GO" id="GO:0000028">
    <property type="term" value="P:ribosomal small subunit assembly"/>
    <property type="evidence" value="ECO:0007669"/>
    <property type="project" value="TreeGrafter"/>
</dbReference>
<dbReference type="GO" id="GO:0006412">
    <property type="term" value="P:translation"/>
    <property type="evidence" value="ECO:0007669"/>
    <property type="project" value="TreeGrafter"/>
</dbReference>
<dbReference type="CDD" id="cd01734">
    <property type="entry name" value="YlxS_C"/>
    <property type="match status" value="1"/>
</dbReference>
<dbReference type="Gene3D" id="3.30.300.70">
    <property type="entry name" value="RimP-like superfamily, N-terminal"/>
    <property type="match status" value="1"/>
</dbReference>
<dbReference type="HAMAP" id="MF_01077">
    <property type="entry name" value="RimP"/>
    <property type="match status" value="1"/>
</dbReference>
<dbReference type="InterPro" id="IPR003728">
    <property type="entry name" value="Ribosome_maturation_RimP"/>
</dbReference>
<dbReference type="InterPro" id="IPR028998">
    <property type="entry name" value="RimP_C"/>
</dbReference>
<dbReference type="InterPro" id="IPR036847">
    <property type="entry name" value="RimP_C_sf"/>
</dbReference>
<dbReference type="InterPro" id="IPR028989">
    <property type="entry name" value="RimP_N"/>
</dbReference>
<dbReference type="InterPro" id="IPR035956">
    <property type="entry name" value="RimP_N_sf"/>
</dbReference>
<dbReference type="NCBIfam" id="NF000935">
    <property type="entry name" value="PRK00092.3-3"/>
    <property type="match status" value="1"/>
</dbReference>
<dbReference type="PANTHER" id="PTHR33867">
    <property type="entry name" value="RIBOSOME MATURATION FACTOR RIMP"/>
    <property type="match status" value="1"/>
</dbReference>
<dbReference type="PANTHER" id="PTHR33867:SF1">
    <property type="entry name" value="RIBOSOME MATURATION FACTOR RIMP"/>
    <property type="match status" value="1"/>
</dbReference>
<dbReference type="Pfam" id="PF17384">
    <property type="entry name" value="DUF150_C"/>
    <property type="match status" value="1"/>
</dbReference>
<dbReference type="Pfam" id="PF02576">
    <property type="entry name" value="RimP_N"/>
    <property type="match status" value="1"/>
</dbReference>
<dbReference type="SUPFAM" id="SSF74942">
    <property type="entry name" value="YhbC-like, C-terminal domain"/>
    <property type="match status" value="1"/>
</dbReference>
<dbReference type="SUPFAM" id="SSF75420">
    <property type="entry name" value="YhbC-like, N-terminal domain"/>
    <property type="match status" value="1"/>
</dbReference>
<proteinExistence type="inferred from homology"/>
<comment type="function">
    <text evidence="1">Required for maturation of 30S ribosomal subunits.</text>
</comment>
<comment type="subcellular location">
    <subcellularLocation>
        <location evidence="1">Cytoplasm</location>
    </subcellularLocation>
</comment>
<comment type="similarity">
    <text evidence="1">Belongs to the RimP family.</text>
</comment>
<sequence>MVHPLIPQLESLARPLAAQLGYQLVQMVFHTNQHPPVLRVDIRPLDPDRETSHADCEAMSQALEVELDRVDLIPGQYVLEVSSPGISNLLTSDRDFVVFKGFAVEVTLDPPYKGKAVWSGHLLGRDEERVALSLKGRRVQLPRASVQRVALSSETD</sequence>
<feature type="chain" id="PRO_1000064788" description="Ribosome maturation factor RimP">
    <location>
        <begin position="1"/>
        <end position="156"/>
    </location>
</feature>
<evidence type="ECO:0000255" key="1">
    <source>
        <dbReference type="HAMAP-Rule" id="MF_01077"/>
    </source>
</evidence>
<keyword id="KW-0963">Cytoplasm</keyword>
<keyword id="KW-1185">Reference proteome</keyword>
<keyword id="KW-0690">Ribosome biogenesis</keyword>
<gene>
    <name evidence="1" type="primary">rimP</name>
    <name type="ordered locus">CYB_2246</name>
</gene>
<reference key="1">
    <citation type="journal article" date="2007" name="ISME J.">
        <title>Population level functional diversity in a microbial community revealed by comparative genomic and metagenomic analyses.</title>
        <authorList>
            <person name="Bhaya D."/>
            <person name="Grossman A.R."/>
            <person name="Steunou A.-S."/>
            <person name="Khuri N."/>
            <person name="Cohan F.M."/>
            <person name="Hamamura N."/>
            <person name="Melendrez M.C."/>
            <person name="Bateson M.M."/>
            <person name="Ward D.M."/>
            <person name="Heidelberg J.F."/>
        </authorList>
    </citation>
    <scope>NUCLEOTIDE SEQUENCE [LARGE SCALE GENOMIC DNA]</scope>
    <source>
        <strain>JA-2-3B'a(2-13)</strain>
    </source>
</reference>
<name>RIMP_SYNJB</name>
<accession>Q2JJI0</accession>
<protein>
    <recommendedName>
        <fullName evidence="1">Ribosome maturation factor RimP</fullName>
    </recommendedName>
</protein>